<dbReference type="EMBL" id="AF107838">
    <property type="protein sequence ID" value="AAD43443.1"/>
    <property type="molecule type" value="mRNA"/>
</dbReference>
<dbReference type="EMBL" id="AK051078">
    <property type="protein sequence ID" value="BAC34519.1"/>
    <property type="molecule type" value="mRNA"/>
</dbReference>
<dbReference type="EMBL" id="AK075936">
    <property type="protein sequence ID" value="BAC36066.1"/>
    <property type="molecule type" value="mRNA"/>
</dbReference>
<dbReference type="EMBL" id="AK081160">
    <property type="protein sequence ID" value="BAC38150.1"/>
    <property type="molecule type" value="mRNA"/>
</dbReference>
<dbReference type="EMBL" id="AK145654">
    <property type="protein sequence ID" value="BAE26568.1"/>
    <property type="molecule type" value="mRNA"/>
</dbReference>
<dbReference type="EMBL" id="AK163017">
    <property type="protein sequence ID" value="BAE37156.1"/>
    <property type="molecule type" value="mRNA"/>
</dbReference>
<dbReference type="EMBL" id="AK167169">
    <property type="protein sequence ID" value="BAE39307.1"/>
    <property type="molecule type" value="mRNA"/>
</dbReference>
<dbReference type="EMBL" id="AK171504">
    <property type="protein sequence ID" value="BAE42495.1"/>
    <property type="status" value="ALT_SEQ"/>
    <property type="molecule type" value="mRNA"/>
</dbReference>
<dbReference type="CCDS" id="CCDS21990.1"/>
<dbReference type="RefSeq" id="NP_036005.1">
    <property type="nucleotide sequence ID" value="NM_011875.4"/>
</dbReference>
<dbReference type="SMR" id="Q9WVJ2"/>
<dbReference type="BioGRID" id="204846">
    <property type="interactions" value="59"/>
</dbReference>
<dbReference type="FunCoup" id="Q9WVJ2">
    <property type="interactions" value="3469"/>
</dbReference>
<dbReference type="IntAct" id="Q9WVJ2">
    <property type="interactions" value="4"/>
</dbReference>
<dbReference type="STRING" id="10090.ENSMUSP00000026560"/>
<dbReference type="GlyGen" id="Q9WVJ2">
    <property type="glycosylation" value="1 site, 1 O-linked glycan (1 site)"/>
</dbReference>
<dbReference type="iPTMnet" id="Q9WVJ2"/>
<dbReference type="PhosphoSitePlus" id="Q9WVJ2"/>
<dbReference type="SwissPalm" id="Q9WVJ2"/>
<dbReference type="jPOST" id="Q9WVJ2"/>
<dbReference type="PaxDb" id="10090-ENSMUSP00000026560"/>
<dbReference type="ProteomicsDB" id="291574"/>
<dbReference type="Pumba" id="Q9WVJ2"/>
<dbReference type="Antibodypedia" id="22386">
    <property type="antibodies" value="190 antibodies from 31 providers"/>
</dbReference>
<dbReference type="DNASU" id="23997"/>
<dbReference type="Ensembl" id="ENSMUST00000026560.14">
    <property type="protein sequence ID" value="ENSMUSP00000026560.8"/>
    <property type="gene ID" value="ENSMUSG00000025487.16"/>
</dbReference>
<dbReference type="GeneID" id="23997"/>
<dbReference type="KEGG" id="mmu:23997"/>
<dbReference type="UCSC" id="uc009kim.1">
    <property type="organism name" value="mouse"/>
</dbReference>
<dbReference type="AGR" id="MGI:1345192"/>
<dbReference type="CTD" id="5719"/>
<dbReference type="MGI" id="MGI:1345192">
    <property type="gene designation" value="Psmd13"/>
</dbReference>
<dbReference type="VEuPathDB" id="HostDB:ENSMUSG00000025487"/>
<dbReference type="eggNOG" id="KOG2908">
    <property type="taxonomic scope" value="Eukaryota"/>
</dbReference>
<dbReference type="GeneTree" id="ENSGT00390000001802"/>
<dbReference type="InParanoid" id="Q9WVJ2"/>
<dbReference type="OMA" id="SFEDYWE"/>
<dbReference type="OrthoDB" id="1093at2759"/>
<dbReference type="PhylomeDB" id="Q9WVJ2"/>
<dbReference type="TreeFam" id="TF105612"/>
<dbReference type="Reactome" id="R-MMU-1169091">
    <property type="pathway name" value="Activation of NF-kappaB in B cells"/>
</dbReference>
<dbReference type="Reactome" id="R-MMU-1234176">
    <property type="pathway name" value="Oxygen-dependent proline hydroxylation of Hypoxia-inducible Factor Alpha"/>
</dbReference>
<dbReference type="Reactome" id="R-MMU-1236978">
    <property type="pathway name" value="Cross-presentation of soluble exogenous antigens (endosomes)"/>
</dbReference>
<dbReference type="Reactome" id="R-MMU-174084">
    <property type="pathway name" value="Autodegradation of Cdh1 by Cdh1:APC/C"/>
</dbReference>
<dbReference type="Reactome" id="R-MMU-174154">
    <property type="pathway name" value="APC/C:Cdc20 mediated degradation of Securin"/>
</dbReference>
<dbReference type="Reactome" id="R-MMU-174178">
    <property type="pathway name" value="APC/C:Cdh1 mediated degradation of Cdc20 and other APC/C:Cdh1 targeted proteins in late mitosis/early G1"/>
</dbReference>
<dbReference type="Reactome" id="R-MMU-174184">
    <property type="pathway name" value="Cdc20:Phospho-APC/C mediated degradation of Cyclin A"/>
</dbReference>
<dbReference type="Reactome" id="R-MMU-187577">
    <property type="pathway name" value="SCF(Skp2)-mediated degradation of p27/p21"/>
</dbReference>
<dbReference type="Reactome" id="R-MMU-195253">
    <property type="pathway name" value="Degradation of beta-catenin by the destruction complex"/>
</dbReference>
<dbReference type="Reactome" id="R-MMU-202424">
    <property type="pathway name" value="Downstream TCR signaling"/>
</dbReference>
<dbReference type="Reactome" id="R-MMU-2467813">
    <property type="pathway name" value="Separation of Sister Chromatids"/>
</dbReference>
<dbReference type="Reactome" id="R-MMU-2871837">
    <property type="pathway name" value="FCERI mediated NF-kB activation"/>
</dbReference>
<dbReference type="Reactome" id="R-MMU-349425">
    <property type="pathway name" value="Autodegradation of the E3 ubiquitin ligase COP1"/>
</dbReference>
<dbReference type="Reactome" id="R-MMU-350562">
    <property type="pathway name" value="Regulation of ornithine decarboxylase (ODC)"/>
</dbReference>
<dbReference type="Reactome" id="R-MMU-382556">
    <property type="pathway name" value="ABC-family proteins mediated transport"/>
</dbReference>
<dbReference type="Reactome" id="R-MMU-450408">
    <property type="pathway name" value="AUF1 (hnRNP D0) binds and destabilizes mRNA"/>
</dbReference>
<dbReference type="Reactome" id="R-MMU-4608870">
    <property type="pathway name" value="Asymmetric localization of PCP proteins"/>
</dbReference>
<dbReference type="Reactome" id="R-MMU-4641257">
    <property type="pathway name" value="Degradation of AXIN"/>
</dbReference>
<dbReference type="Reactome" id="R-MMU-4641258">
    <property type="pathway name" value="Degradation of DVL"/>
</dbReference>
<dbReference type="Reactome" id="R-MMU-5358346">
    <property type="pathway name" value="Hedgehog ligand biogenesis"/>
</dbReference>
<dbReference type="Reactome" id="R-MMU-5607761">
    <property type="pathway name" value="Dectin-1 mediated noncanonical NF-kB signaling"/>
</dbReference>
<dbReference type="Reactome" id="R-MMU-5607764">
    <property type="pathway name" value="CLEC7A (Dectin-1) signaling"/>
</dbReference>
<dbReference type="Reactome" id="R-MMU-5610780">
    <property type="pathway name" value="Degradation of GLI1 by the proteasome"/>
</dbReference>
<dbReference type="Reactome" id="R-MMU-5610785">
    <property type="pathway name" value="GLI3 is processed to GLI3R by the proteasome"/>
</dbReference>
<dbReference type="Reactome" id="R-MMU-5632684">
    <property type="pathway name" value="Hedgehog 'on' state"/>
</dbReference>
<dbReference type="Reactome" id="R-MMU-5658442">
    <property type="pathway name" value="Regulation of RAS by GAPs"/>
</dbReference>
<dbReference type="Reactome" id="R-MMU-5668541">
    <property type="pathway name" value="TNFR2 non-canonical NF-kB pathway"/>
</dbReference>
<dbReference type="Reactome" id="R-MMU-5676590">
    <property type="pathway name" value="NIK--&gt;noncanonical NF-kB signaling"/>
</dbReference>
<dbReference type="Reactome" id="R-MMU-5687128">
    <property type="pathway name" value="MAPK6/MAPK4 signaling"/>
</dbReference>
<dbReference type="Reactome" id="R-MMU-5689603">
    <property type="pathway name" value="UCH proteinases"/>
</dbReference>
<dbReference type="Reactome" id="R-MMU-5689880">
    <property type="pathway name" value="Ub-specific processing proteases"/>
</dbReference>
<dbReference type="Reactome" id="R-MMU-6798695">
    <property type="pathway name" value="Neutrophil degranulation"/>
</dbReference>
<dbReference type="Reactome" id="R-MMU-68867">
    <property type="pathway name" value="Assembly of the pre-replicative complex"/>
</dbReference>
<dbReference type="Reactome" id="R-MMU-68949">
    <property type="pathway name" value="Orc1 removal from chromatin"/>
</dbReference>
<dbReference type="Reactome" id="R-MMU-69017">
    <property type="pathway name" value="CDK-mediated phosphorylation and removal of Cdc6"/>
</dbReference>
<dbReference type="Reactome" id="R-MMU-69481">
    <property type="pathway name" value="G2/M Checkpoints"/>
</dbReference>
<dbReference type="Reactome" id="R-MMU-69601">
    <property type="pathway name" value="Ubiquitin Mediated Degradation of Phosphorylated Cdc25A"/>
</dbReference>
<dbReference type="Reactome" id="R-MMU-75815">
    <property type="pathway name" value="Ubiquitin-dependent degradation of Cyclin D"/>
</dbReference>
<dbReference type="Reactome" id="R-MMU-8852276">
    <property type="pathway name" value="The role of GTSE1 in G2/M progression after G2 checkpoint"/>
</dbReference>
<dbReference type="Reactome" id="R-MMU-8854050">
    <property type="pathway name" value="FBXL7 down-regulates AURKA during mitotic entry and in early mitosis"/>
</dbReference>
<dbReference type="Reactome" id="R-MMU-8939236">
    <property type="pathway name" value="RUNX1 regulates transcription of genes involved in differentiation of HSCs"/>
</dbReference>
<dbReference type="Reactome" id="R-MMU-8939902">
    <property type="pathway name" value="Regulation of RUNX2 expression and activity"/>
</dbReference>
<dbReference type="Reactome" id="R-MMU-8941858">
    <property type="pathway name" value="Regulation of RUNX3 expression and activity"/>
</dbReference>
<dbReference type="Reactome" id="R-MMU-8948751">
    <property type="pathway name" value="Regulation of PTEN stability and activity"/>
</dbReference>
<dbReference type="Reactome" id="R-MMU-8951664">
    <property type="pathway name" value="Neddylation"/>
</dbReference>
<dbReference type="Reactome" id="R-MMU-9020702">
    <property type="pathway name" value="Interleukin-1 signaling"/>
</dbReference>
<dbReference type="Reactome" id="R-MMU-9755511">
    <property type="pathway name" value="KEAP1-NFE2L2 pathway"/>
</dbReference>
<dbReference type="Reactome" id="R-MMU-9762114">
    <property type="pathway name" value="GSK3B and BTRC:CUL1-mediated-degradation of NFE2L2"/>
</dbReference>
<dbReference type="Reactome" id="R-MMU-983168">
    <property type="pathway name" value="Antigen processing: Ubiquitination &amp; Proteasome degradation"/>
</dbReference>
<dbReference type="Reactome" id="R-MMU-9907900">
    <property type="pathway name" value="Proteasome assembly"/>
</dbReference>
<dbReference type="BioGRID-ORCS" id="23997">
    <property type="hits" value="27 hits in 79 CRISPR screens"/>
</dbReference>
<dbReference type="ChiTaRS" id="Psmd13">
    <property type="organism name" value="mouse"/>
</dbReference>
<dbReference type="PRO" id="PR:Q9WVJ2"/>
<dbReference type="Proteomes" id="UP000000589">
    <property type="component" value="Chromosome 7"/>
</dbReference>
<dbReference type="RNAct" id="Q9WVJ2">
    <property type="molecule type" value="protein"/>
</dbReference>
<dbReference type="Bgee" id="ENSMUSG00000025487">
    <property type="expression patterns" value="Expressed in ectoplacental cone and 277 other cell types or tissues"/>
</dbReference>
<dbReference type="ExpressionAtlas" id="Q9WVJ2">
    <property type="expression patterns" value="baseline and differential"/>
</dbReference>
<dbReference type="GO" id="GO:0022624">
    <property type="term" value="C:proteasome accessory complex"/>
    <property type="evidence" value="ECO:0000314"/>
    <property type="project" value="UniProtKB"/>
</dbReference>
<dbReference type="GO" id="GO:0005838">
    <property type="term" value="C:proteasome regulatory particle"/>
    <property type="evidence" value="ECO:0000314"/>
    <property type="project" value="MGI"/>
</dbReference>
<dbReference type="GO" id="GO:0004175">
    <property type="term" value="F:endopeptidase activity"/>
    <property type="evidence" value="ECO:0000247"/>
    <property type="project" value="MGI"/>
</dbReference>
<dbReference type="GO" id="GO:0007127">
    <property type="term" value="P:meiosis I"/>
    <property type="evidence" value="ECO:0000315"/>
    <property type="project" value="MGI"/>
</dbReference>
<dbReference type="InterPro" id="IPR000717">
    <property type="entry name" value="PCI_dom"/>
</dbReference>
<dbReference type="InterPro" id="IPR054179">
    <property type="entry name" value="PSD13_N"/>
</dbReference>
<dbReference type="InterPro" id="IPR035298">
    <property type="entry name" value="PSMD13"/>
</dbReference>
<dbReference type="InterPro" id="IPR036390">
    <property type="entry name" value="WH_DNA-bd_sf"/>
</dbReference>
<dbReference type="PANTHER" id="PTHR10539">
    <property type="entry name" value="26S PROTEASOME NON-ATPASE REGULATORY SUBUNIT 13"/>
    <property type="match status" value="1"/>
</dbReference>
<dbReference type="PANTHER" id="PTHR10539:SF0">
    <property type="entry name" value="26S PROTEASOME NON-ATPASE REGULATORY SUBUNIT 13"/>
    <property type="match status" value="1"/>
</dbReference>
<dbReference type="Pfam" id="PF01399">
    <property type="entry name" value="PCI"/>
    <property type="match status" value="1"/>
</dbReference>
<dbReference type="Pfam" id="PF22037">
    <property type="entry name" value="PSD13_N"/>
    <property type="match status" value="1"/>
</dbReference>
<dbReference type="SMART" id="SM00088">
    <property type="entry name" value="PINT"/>
    <property type="match status" value="1"/>
</dbReference>
<dbReference type="SUPFAM" id="SSF46785">
    <property type="entry name" value="Winged helix' DNA-binding domain"/>
    <property type="match status" value="1"/>
</dbReference>
<dbReference type="PROSITE" id="PS50250">
    <property type="entry name" value="PCI"/>
    <property type="match status" value="1"/>
</dbReference>
<gene>
    <name type="primary">Psmd13</name>
</gene>
<feature type="chain" id="PRO_0000173868" description="26S proteasome non-ATPase regulatory subunit 13">
    <location>
        <begin position="1"/>
        <end position="376"/>
    </location>
</feature>
<feature type="domain" description="PCI" evidence="2">
    <location>
        <begin position="171"/>
        <end position="338"/>
    </location>
</feature>
<feature type="modified residue" description="N6-acetyllysine" evidence="1">
    <location>
        <position position="298"/>
    </location>
</feature>
<feature type="sequence conflict" description="In Ref. 2; BAE37156." evidence="4" ref="2">
    <original>T</original>
    <variation>A</variation>
    <location>
        <position position="358"/>
    </location>
</feature>
<protein>
    <recommendedName>
        <fullName>26S proteasome non-ATPase regulatory subunit 13</fullName>
    </recommendedName>
    <alternativeName>
        <fullName>26S proteasome regulatory subunit RPN9</fullName>
    </alternativeName>
    <alternativeName>
        <fullName>26S proteasome regulatory subunit S11</fullName>
    </alternativeName>
    <alternativeName>
        <fullName>26S proteasome regulatory subunit p40.5</fullName>
    </alternativeName>
</protein>
<sequence length="376" mass="42809">MKDVPAFLQQSQSSGPGQAAVWHRLEELYTKKLWHQLTLEVLDFVQDPCFAQGDGLIKLYENFISEFEHRVNPLSLVEIILHVVRQMTDPNVALTFLEKTREKVKSSDEAVILCKTAIGALKLNIGDLQATKETIEDVEEMLNNLPGVTSVHSRFYDLSSKYYQTIGNHASYYKDALRFLGCVDIKDLPVSEQQERAFTLGLAGLLGEGVFNFGELLMHPVLESLRDTDRQWLIDTLYAFNSGAVDRFQTLKCAWGQQPDLAANEAQLLRKIQLLCLMEMTFTRPANHRQLTFEEIAKSAKITVNKVELLVMKALSVGLVRGSIDEVDKRVHMTWVQPRVLDLQQIKGMKDRLELWCTDVKSMEMLVEHQAQDILT</sequence>
<evidence type="ECO:0000250" key="1">
    <source>
        <dbReference type="UniProtKB" id="Q9UNM6"/>
    </source>
</evidence>
<evidence type="ECO:0000255" key="2">
    <source>
        <dbReference type="PROSITE-ProRule" id="PRU01185"/>
    </source>
</evidence>
<evidence type="ECO:0000269" key="3">
    <source>
    </source>
</evidence>
<evidence type="ECO:0000305" key="4"/>
<accession>Q9WVJ2</accession>
<accession>Q3TB19</accession>
<accession>Q3TR74</accession>
<accession>Q542R0</accession>
<reference key="1">
    <citation type="submission" date="1998-11" db="EMBL/GenBank/DDBJ databases">
        <title>Cloning of the mouse gene for the 26S proteasome subunit p40.5.</title>
        <authorList>
            <person name="Ting M.C."/>
            <person name="Chang L.Y."/>
        </authorList>
    </citation>
    <scope>NUCLEOTIDE SEQUENCE [MRNA]</scope>
    <source>
        <tissue>Liver</tissue>
    </source>
</reference>
<reference key="2">
    <citation type="journal article" date="2005" name="Science">
        <title>The transcriptional landscape of the mammalian genome.</title>
        <authorList>
            <person name="Carninci P."/>
            <person name="Kasukawa T."/>
            <person name="Katayama S."/>
            <person name="Gough J."/>
            <person name="Frith M.C."/>
            <person name="Maeda N."/>
            <person name="Oyama R."/>
            <person name="Ravasi T."/>
            <person name="Lenhard B."/>
            <person name="Wells C."/>
            <person name="Kodzius R."/>
            <person name="Shimokawa K."/>
            <person name="Bajic V.B."/>
            <person name="Brenner S.E."/>
            <person name="Batalov S."/>
            <person name="Forrest A.R."/>
            <person name="Zavolan M."/>
            <person name="Davis M.J."/>
            <person name="Wilming L.G."/>
            <person name="Aidinis V."/>
            <person name="Allen J.E."/>
            <person name="Ambesi-Impiombato A."/>
            <person name="Apweiler R."/>
            <person name="Aturaliya R.N."/>
            <person name="Bailey T.L."/>
            <person name="Bansal M."/>
            <person name="Baxter L."/>
            <person name="Beisel K.W."/>
            <person name="Bersano T."/>
            <person name="Bono H."/>
            <person name="Chalk A.M."/>
            <person name="Chiu K.P."/>
            <person name="Choudhary V."/>
            <person name="Christoffels A."/>
            <person name="Clutterbuck D.R."/>
            <person name="Crowe M.L."/>
            <person name="Dalla E."/>
            <person name="Dalrymple B.P."/>
            <person name="de Bono B."/>
            <person name="Della Gatta G."/>
            <person name="di Bernardo D."/>
            <person name="Down T."/>
            <person name="Engstrom P."/>
            <person name="Fagiolini M."/>
            <person name="Faulkner G."/>
            <person name="Fletcher C.F."/>
            <person name="Fukushima T."/>
            <person name="Furuno M."/>
            <person name="Futaki S."/>
            <person name="Gariboldi M."/>
            <person name="Georgii-Hemming P."/>
            <person name="Gingeras T.R."/>
            <person name="Gojobori T."/>
            <person name="Green R.E."/>
            <person name="Gustincich S."/>
            <person name="Harbers M."/>
            <person name="Hayashi Y."/>
            <person name="Hensch T.K."/>
            <person name="Hirokawa N."/>
            <person name="Hill D."/>
            <person name="Huminiecki L."/>
            <person name="Iacono M."/>
            <person name="Ikeo K."/>
            <person name="Iwama A."/>
            <person name="Ishikawa T."/>
            <person name="Jakt M."/>
            <person name="Kanapin A."/>
            <person name="Katoh M."/>
            <person name="Kawasawa Y."/>
            <person name="Kelso J."/>
            <person name="Kitamura H."/>
            <person name="Kitano H."/>
            <person name="Kollias G."/>
            <person name="Krishnan S.P."/>
            <person name="Kruger A."/>
            <person name="Kummerfeld S.K."/>
            <person name="Kurochkin I.V."/>
            <person name="Lareau L.F."/>
            <person name="Lazarevic D."/>
            <person name="Lipovich L."/>
            <person name="Liu J."/>
            <person name="Liuni S."/>
            <person name="McWilliam S."/>
            <person name="Madan Babu M."/>
            <person name="Madera M."/>
            <person name="Marchionni L."/>
            <person name="Matsuda H."/>
            <person name="Matsuzawa S."/>
            <person name="Miki H."/>
            <person name="Mignone F."/>
            <person name="Miyake S."/>
            <person name="Morris K."/>
            <person name="Mottagui-Tabar S."/>
            <person name="Mulder N."/>
            <person name="Nakano N."/>
            <person name="Nakauchi H."/>
            <person name="Ng P."/>
            <person name="Nilsson R."/>
            <person name="Nishiguchi S."/>
            <person name="Nishikawa S."/>
            <person name="Nori F."/>
            <person name="Ohara O."/>
            <person name="Okazaki Y."/>
            <person name="Orlando V."/>
            <person name="Pang K.C."/>
            <person name="Pavan W.J."/>
            <person name="Pavesi G."/>
            <person name="Pesole G."/>
            <person name="Petrovsky N."/>
            <person name="Piazza S."/>
            <person name="Reed J."/>
            <person name="Reid J.F."/>
            <person name="Ring B.Z."/>
            <person name="Ringwald M."/>
            <person name="Rost B."/>
            <person name="Ruan Y."/>
            <person name="Salzberg S.L."/>
            <person name="Sandelin A."/>
            <person name="Schneider C."/>
            <person name="Schoenbach C."/>
            <person name="Sekiguchi K."/>
            <person name="Semple C.A."/>
            <person name="Seno S."/>
            <person name="Sessa L."/>
            <person name="Sheng Y."/>
            <person name="Shibata Y."/>
            <person name="Shimada H."/>
            <person name="Shimada K."/>
            <person name="Silva D."/>
            <person name="Sinclair B."/>
            <person name="Sperling S."/>
            <person name="Stupka E."/>
            <person name="Sugiura K."/>
            <person name="Sultana R."/>
            <person name="Takenaka Y."/>
            <person name="Taki K."/>
            <person name="Tammoja K."/>
            <person name="Tan S.L."/>
            <person name="Tang S."/>
            <person name="Taylor M.S."/>
            <person name="Tegner J."/>
            <person name="Teichmann S.A."/>
            <person name="Ueda H.R."/>
            <person name="van Nimwegen E."/>
            <person name="Verardo R."/>
            <person name="Wei C.L."/>
            <person name="Yagi K."/>
            <person name="Yamanishi H."/>
            <person name="Zabarovsky E."/>
            <person name="Zhu S."/>
            <person name="Zimmer A."/>
            <person name="Hide W."/>
            <person name="Bult C."/>
            <person name="Grimmond S.M."/>
            <person name="Teasdale R.D."/>
            <person name="Liu E.T."/>
            <person name="Brusic V."/>
            <person name="Quackenbush J."/>
            <person name="Wahlestedt C."/>
            <person name="Mattick J.S."/>
            <person name="Hume D.A."/>
            <person name="Kai C."/>
            <person name="Sasaki D."/>
            <person name="Tomaru Y."/>
            <person name="Fukuda S."/>
            <person name="Kanamori-Katayama M."/>
            <person name="Suzuki M."/>
            <person name="Aoki J."/>
            <person name="Arakawa T."/>
            <person name="Iida J."/>
            <person name="Imamura K."/>
            <person name="Itoh M."/>
            <person name="Kato T."/>
            <person name="Kawaji H."/>
            <person name="Kawagashira N."/>
            <person name="Kawashima T."/>
            <person name="Kojima M."/>
            <person name="Kondo S."/>
            <person name="Konno H."/>
            <person name="Nakano K."/>
            <person name="Ninomiya N."/>
            <person name="Nishio T."/>
            <person name="Okada M."/>
            <person name="Plessy C."/>
            <person name="Shibata K."/>
            <person name="Shiraki T."/>
            <person name="Suzuki S."/>
            <person name="Tagami M."/>
            <person name="Waki K."/>
            <person name="Watahiki A."/>
            <person name="Okamura-Oho Y."/>
            <person name="Suzuki H."/>
            <person name="Kawai J."/>
            <person name="Hayashizaki Y."/>
        </authorList>
    </citation>
    <scope>NUCLEOTIDE SEQUENCE [LARGE SCALE MRNA]</scope>
    <source>
        <strain>C57BL/6J</strain>
        <tissue>Cerebellum</tissue>
        <tissue>Thymus</tissue>
    </source>
</reference>
<reference key="3">
    <citation type="submission" date="2007-03" db="UniProtKB">
        <authorList>
            <person name="Lubec G."/>
            <person name="Klug S."/>
        </authorList>
    </citation>
    <scope>PROTEIN SEQUENCE OF 59-70</scope>
    <scope>IDENTIFICATION BY MASS SPECTROMETRY</scope>
    <source>
        <tissue>Hippocampus</tissue>
    </source>
</reference>
<reference key="4">
    <citation type="journal article" date="2006" name="Circ. Res.">
        <title>Mapping the murine cardiac 26S proteasome complexes.</title>
        <authorList>
            <person name="Gomes A.V."/>
            <person name="Zong C."/>
            <person name="Edmondson R.D."/>
            <person name="Li X."/>
            <person name="Stefani E."/>
            <person name="Zhang J."/>
            <person name="Jones R.C."/>
            <person name="Thyparambil S."/>
            <person name="Wang G.W."/>
            <person name="Qiao X."/>
            <person name="Bardag-Gorce F."/>
            <person name="Ping P."/>
        </authorList>
    </citation>
    <scope>IDENTIFICATION IN THE 19S PROTEASOME REGULATORY COMPLEX</scope>
</reference>
<reference key="5">
    <citation type="journal article" date="2010" name="Cell">
        <title>A tissue-specific atlas of mouse protein phosphorylation and expression.</title>
        <authorList>
            <person name="Huttlin E.L."/>
            <person name="Jedrychowski M.P."/>
            <person name="Elias J.E."/>
            <person name="Goswami T."/>
            <person name="Rad R."/>
            <person name="Beausoleil S.A."/>
            <person name="Villen J."/>
            <person name="Haas W."/>
            <person name="Sowa M.E."/>
            <person name="Gygi S.P."/>
        </authorList>
    </citation>
    <scope>IDENTIFICATION BY MASS SPECTROMETRY [LARGE SCALE ANALYSIS]</scope>
    <source>
        <tissue>Brain</tissue>
        <tissue>Brown adipose tissue</tissue>
        <tissue>Heart</tissue>
        <tissue>Kidney</tissue>
        <tissue>Liver</tissue>
        <tissue>Lung</tissue>
        <tissue>Pancreas</tissue>
        <tissue>Spleen</tissue>
        <tissue>Testis</tissue>
    </source>
</reference>
<organism>
    <name type="scientific">Mus musculus</name>
    <name type="common">Mouse</name>
    <dbReference type="NCBI Taxonomy" id="10090"/>
    <lineage>
        <taxon>Eukaryota</taxon>
        <taxon>Metazoa</taxon>
        <taxon>Chordata</taxon>
        <taxon>Craniata</taxon>
        <taxon>Vertebrata</taxon>
        <taxon>Euteleostomi</taxon>
        <taxon>Mammalia</taxon>
        <taxon>Eutheria</taxon>
        <taxon>Euarchontoglires</taxon>
        <taxon>Glires</taxon>
        <taxon>Rodentia</taxon>
        <taxon>Myomorpha</taxon>
        <taxon>Muroidea</taxon>
        <taxon>Muridae</taxon>
        <taxon>Murinae</taxon>
        <taxon>Mus</taxon>
        <taxon>Mus</taxon>
    </lineage>
</organism>
<name>PSD13_MOUSE</name>
<keyword id="KW-0007">Acetylation</keyword>
<keyword id="KW-0903">Direct protein sequencing</keyword>
<keyword id="KW-0647">Proteasome</keyword>
<keyword id="KW-1185">Reference proteome</keyword>
<proteinExistence type="evidence at protein level"/>
<comment type="function">
    <text evidence="1">Component of the 26S proteasome, a multiprotein complex involved in the ATP-dependent degradation of ubiquitinated proteins. This complex plays a key role in the maintenance of protein homeostasis by removing misfolded or damaged proteins, which could impair cellular functions, and by removing proteins whose functions are no longer required. Therefore, the proteasome participates in numerous cellular processes, including cell cycle progression, apoptosis, or DNA damage repair.</text>
</comment>
<comment type="subunit">
    <text evidence="1 3">Component of the 19S proteasome regulatory particle complex. The 26S proteasome consists of a 20S core particle (CP) and two 19S regulatory subunits (RP). The regulatory particle is made of a lid composed of 9 subunits including PSMD13, a base containing 6 ATPases and few additional components.</text>
</comment>
<comment type="similarity">
    <text evidence="4">Belongs to the proteasome subunit S11 family.</text>
</comment>
<comment type="sequence caution" evidence="4">
    <conflict type="miscellaneous discrepancy">
        <sequence resource="EMBL-CDS" id="BAE42495"/>
    </conflict>
    <text>Intron retention.</text>
</comment>